<feature type="chain" id="PRO_0000287329" description="L-threonine dehydratase catabolic TdcB">
    <location>
        <begin position="1"/>
        <end position="346"/>
    </location>
</feature>
<feature type="binding site" evidence="1">
    <location>
        <begin position="59"/>
        <end position="60"/>
    </location>
    <ligand>
        <name>AMP</name>
        <dbReference type="ChEBI" id="CHEBI:456215"/>
    </ligand>
</feature>
<feature type="binding site" evidence="1">
    <location>
        <position position="94"/>
    </location>
    <ligand>
        <name>AMP</name>
        <dbReference type="ChEBI" id="CHEBI:456215"/>
    </ligand>
</feature>
<feature type="binding site" evidence="1">
    <location>
        <begin position="125"/>
        <end position="126"/>
    </location>
    <ligand>
        <name>AMP</name>
        <dbReference type="ChEBI" id="CHEBI:456215"/>
    </ligand>
</feature>
<feature type="binding site" evidence="1">
    <location>
        <position position="321"/>
    </location>
    <ligand>
        <name>AMP</name>
        <dbReference type="ChEBI" id="CHEBI:456215"/>
    </ligand>
</feature>
<feature type="modified residue" description="N6-(pyridoxal phosphate)lysine" evidence="1">
    <location>
        <position position="64"/>
    </location>
</feature>
<dbReference type="EC" id="4.3.1.19"/>
<dbReference type="EMBL" id="BX571857">
    <property type="protein sequence ID" value="CAG43157.1"/>
    <property type="molecule type" value="Genomic_DNA"/>
</dbReference>
<dbReference type="RefSeq" id="WP_000210828.1">
    <property type="nucleotide sequence ID" value="NC_002953.3"/>
</dbReference>
<dbReference type="SMR" id="Q6G9C4"/>
<dbReference type="KEGG" id="sas:SAS1381"/>
<dbReference type="HOGENOM" id="CLU_021152_4_2_9"/>
<dbReference type="UniPathway" id="UPA00052">
    <property type="reaction ID" value="UER00507"/>
</dbReference>
<dbReference type="GO" id="GO:0003941">
    <property type="term" value="F:L-serine ammonia-lyase activity"/>
    <property type="evidence" value="ECO:0007669"/>
    <property type="project" value="TreeGrafter"/>
</dbReference>
<dbReference type="GO" id="GO:0000166">
    <property type="term" value="F:nucleotide binding"/>
    <property type="evidence" value="ECO:0007669"/>
    <property type="project" value="UniProtKB-KW"/>
</dbReference>
<dbReference type="GO" id="GO:0030170">
    <property type="term" value="F:pyridoxal phosphate binding"/>
    <property type="evidence" value="ECO:0007669"/>
    <property type="project" value="InterPro"/>
</dbReference>
<dbReference type="GO" id="GO:0004794">
    <property type="term" value="F:threonine deaminase activity"/>
    <property type="evidence" value="ECO:0007669"/>
    <property type="project" value="UniProtKB-EC"/>
</dbReference>
<dbReference type="GO" id="GO:0009097">
    <property type="term" value="P:isoleucine biosynthetic process"/>
    <property type="evidence" value="ECO:0007669"/>
    <property type="project" value="TreeGrafter"/>
</dbReference>
<dbReference type="GO" id="GO:0006565">
    <property type="term" value="P:L-serine catabolic process"/>
    <property type="evidence" value="ECO:0007669"/>
    <property type="project" value="TreeGrafter"/>
</dbReference>
<dbReference type="GO" id="GO:0070689">
    <property type="term" value="P:L-threonine catabolic process to propionate"/>
    <property type="evidence" value="ECO:0007669"/>
    <property type="project" value="UniProtKB-UniPathway"/>
</dbReference>
<dbReference type="CDD" id="cd01562">
    <property type="entry name" value="Thr-dehyd"/>
    <property type="match status" value="1"/>
</dbReference>
<dbReference type="FunFam" id="3.40.50.1100:FF:000007">
    <property type="entry name" value="L-threonine dehydratase catabolic TdcB"/>
    <property type="match status" value="1"/>
</dbReference>
<dbReference type="Gene3D" id="3.40.50.1100">
    <property type="match status" value="2"/>
</dbReference>
<dbReference type="InterPro" id="IPR050147">
    <property type="entry name" value="Ser/Thr_Dehydratase"/>
</dbReference>
<dbReference type="InterPro" id="IPR000634">
    <property type="entry name" value="Ser/Thr_deHydtase_PyrdxlP-BS"/>
</dbReference>
<dbReference type="InterPro" id="IPR005789">
    <property type="entry name" value="Thr_deHydtase_catblc"/>
</dbReference>
<dbReference type="InterPro" id="IPR001926">
    <property type="entry name" value="TrpB-like_PALP"/>
</dbReference>
<dbReference type="InterPro" id="IPR036052">
    <property type="entry name" value="TrpB-like_PALP_sf"/>
</dbReference>
<dbReference type="NCBIfam" id="TIGR01127">
    <property type="entry name" value="ilvA_1Cterm"/>
    <property type="match status" value="1"/>
</dbReference>
<dbReference type="NCBIfam" id="NF006389">
    <property type="entry name" value="PRK08638.1"/>
    <property type="match status" value="1"/>
</dbReference>
<dbReference type="PANTHER" id="PTHR48078:SF6">
    <property type="entry name" value="L-THREONINE DEHYDRATASE CATABOLIC TDCB"/>
    <property type="match status" value="1"/>
</dbReference>
<dbReference type="PANTHER" id="PTHR48078">
    <property type="entry name" value="THREONINE DEHYDRATASE, MITOCHONDRIAL-RELATED"/>
    <property type="match status" value="1"/>
</dbReference>
<dbReference type="Pfam" id="PF00291">
    <property type="entry name" value="PALP"/>
    <property type="match status" value="1"/>
</dbReference>
<dbReference type="SUPFAM" id="SSF53686">
    <property type="entry name" value="Tryptophan synthase beta subunit-like PLP-dependent enzymes"/>
    <property type="match status" value="1"/>
</dbReference>
<dbReference type="PROSITE" id="PS00165">
    <property type="entry name" value="DEHYDRATASE_SER_THR"/>
    <property type="match status" value="1"/>
</dbReference>
<evidence type="ECO:0000250" key="1"/>
<evidence type="ECO:0000305" key="2"/>
<reference key="1">
    <citation type="journal article" date="2004" name="Proc. Natl. Acad. Sci. U.S.A.">
        <title>Complete genomes of two clinical Staphylococcus aureus strains: evidence for the rapid evolution of virulence and drug resistance.</title>
        <authorList>
            <person name="Holden M.T.G."/>
            <person name="Feil E.J."/>
            <person name="Lindsay J.A."/>
            <person name="Peacock S.J."/>
            <person name="Day N.P.J."/>
            <person name="Enright M.C."/>
            <person name="Foster T.J."/>
            <person name="Moore C.E."/>
            <person name="Hurst L."/>
            <person name="Atkin R."/>
            <person name="Barron A."/>
            <person name="Bason N."/>
            <person name="Bentley S.D."/>
            <person name="Chillingworth C."/>
            <person name="Chillingworth T."/>
            <person name="Churcher C."/>
            <person name="Clark L."/>
            <person name="Corton C."/>
            <person name="Cronin A."/>
            <person name="Doggett J."/>
            <person name="Dowd L."/>
            <person name="Feltwell T."/>
            <person name="Hance Z."/>
            <person name="Harris B."/>
            <person name="Hauser H."/>
            <person name="Holroyd S."/>
            <person name="Jagels K."/>
            <person name="James K.D."/>
            <person name="Lennard N."/>
            <person name="Line A."/>
            <person name="Mayes R."/>
            <person name="Moule S."/>
            <person name="Mungall K."/>
            <person name="Ormond D."/>
            <person name="Quail M.A."/>
            <person name="Rabbinowitsch E."/>
            <person name="Rutherford K.M."/>
            <person name="Sanders M."/>
            <person name="Sharp S."/>
            <person name="Simmonds M."/>
            <person name="Stevens K."/>
            <person name="Whitehead S."/>
            <person name="Barrell B.G."/>
            <person name="Spratt B.G."/>
            <person name="Parkhill J."/>
        </authorList>
    </citation>
    <scope>NUCLEOTIDE SEQUENCE [LARGE SCALE GENOMIC DNA]</scope>
    <source>
        <strain>MSSA476</strain>
    </source>
</reference>
<gene>
    <name type="primary">tdcB</name>
    <name type="ordered locus">SAS1381</name>
</gene>
<proteinExistence type="inferred from homology"/>
<organism>
    <name type="scientific">Staphylococcus aureus (strain MSSA476)</name>
    <dbReference type="NCBI Taxonomy" id="282459"/>
    <lineage>
        <taxon>Bacteria</taxon>
        <taxon>Bacillati</taxon>
        <taxon>Bacillota</taxon>
        <taxon>Bacilli</taxon>
        <taxon>Bacillales</taxon>
        <taxon>Staphylococcaceae</taxon>
        <taxon>Staphylococcus</taxon>
    </lineage>
</organism>
<keyword id="KW-0021">Allosteric enzyme</keyword>
<keyword id="KW-0456">Lyase</keyword>
<keyword id="KW-0547">Nucleotide-binding</keyword>
<keyword id="KW-0663">Pyridoxal phosphate</keyword>
<comment type="function">
    <text evidence="1">Catalyzes the anaerobic formation of alpha-ketobutyrate and ammonia from threonine in a two-step reaction. The first step involved a dehydration of threonine and a production of enamine intermediates (aminocrotonate), which tautomerizes to its imine form (iminobutyrate). Both intermediates are unstable and short-lived. The second step is the nonenzymatic hydrolysis of the enamine/imine intermediates to form 2-ketobutyrate and free ammonia. In the low water environment of the cell, the second step is accelerated by RidA (By similarity).</text>
</comment>
<comment type="catalytic activity">
    <reaction>
        <text>L-threonine = 2-oxobutanoate + NH4(+)</text>
        <dbReference type="Rhea" id="RHEA:22108"/>
        <dbReference type="ChEBI" id="CHEBI:16763"/>
        <dbReference type="ChEBI" id="CHEBI:28938"/>
        <dbReference type="ChEBI" id="CHEBI:57926"/>
        <dbReference type="EC" id="4.3.1.19"/>
    </reaction>
</comment>
<comment type="cofactor">
    <cofactor evidence="1">
        <name>pyridoxal 5'-phosphate</name>
        <dbReference type="ChEBI" id="CHEBI:597326"/>
    </cofactor>
</comment>
<comment type="activity regulation">
    <text evidence="1">Each protein molecule can bind up to four molecules of AMP, which act as an allosteric activator to the enzyme.</text>
</comment>
<comment type="pathway">
    <text>Amino-acid degradation; L-threonine degradation via propanoate pathway; propanoate from L-threonine: step 1/4.</text>
</comment>
<comment type="subunit">
    <text evidence="1">In the native structure, TdcB is in a dimeric form, whereas in the TdcB-AMP complex, it exists in a tetrameric form (dimer of dimers).</text>
</comment>
<comment type="similarity">
    <text evidence="2">Belongs to the serine/threonine dehydratase family.</text>
</comment>
<accession>Q6G9C4</accession>
<sequence>MTTNTVTLQTAHIVSLGDIEEAKASIKPFIRRTPLIKSMYLSQSITKGNVFLKLENMQFTGSFKFRGASNKINHLTDEQKEKGIIAASAGNHAQGVALTAKLLGIDATIVMPETAPQAKQQATKGYGAKVILKGKNFNETRLYMEELAKENGMTIVHPYDDKFVMAGQGTIGLEILDDIWNVNTVIVPVGGGGLIAGIATALKSFNPSIHIIGVQSENVHGMAESFYKRDLTEHRVDSTIADGCDVKVPGEQTYEVVKHLVDEFILVTEEEIEHAMKDLMQRAKIITEGAGALPTAAILSGKINNKWLEDKNVVALVSGGNVDLTRVSGVIEHGLNIADTSKGVVG</sequence>
<name>TDCB_STAAS</name>
<protein>
    <recommendedName>
        <fullName>L-threonine dehydratase catabolic TdcB</fullName>
        <ecNumber>4.3.1.19</ecNumber>
    </recommendedName>
    <alternativeName>
        <fullName>Threonine deaminase</fullName>
    </alternativeName>
</protein>